<feature type="chain" id="PRO_0000085344" description="Protein Tat">
    <location>
        <begin position="1"/>
        <end position="86"/>
    </location>
</feature>
<feature type="region of interest" description="Transactivation" evidence="1">
    <location>
        <begin position="1"/>
        <end position="48"/>
    </location>
</feature>
<feature type="region of interest" description="Interaction with human CREBBP" evidence="1">
    <location>
        <begin position="1"/>
        <end position="24"/>
    </location>
</feature>
<feature type="region of interest" description="Disordered" evidence="2">
    <location>
        <begin position="1"/>
        <end position="21"/>
    </location>
</feature>
<feature type="region of interest" description="Cysteine-rich" evidence="1">
    <location>
        <begin position="22"/>
        <end position="37"/>
    </location>
</feature>
<feature type="region of interest" description="Core" evidence="1">
    <location>
        <begin position="38"/>
        <end position="48"/>
    </location>
</feature>
<feature type="region of interest" description="Disordered" evidence="2">
    <location>
        <begin position="47"/>
        <end position="86"/>
    </location>
</feature>
<feature type="region of interest" description="Interaction with the host capping enzyme RNGTT" evidence="1">
    <location>
        <begin position="49"/>
        <end position="86"/>
    </location>
</feature>
<feature type="short sequence motif" description="Nuclear localization signal, RNA-binding (TAR), and protein transduction" evidence="1">
    <location>
        <begin position="49"/>
        <end position="57"/>
    </location>
</feature>
<feature type="short sequence motif" description="Cell attachment site" evidence="1">
    <location>
        <begin position="78"/>
        <end position="80"/>
    </location>
</feature>
<feature type="compositionally biased region" description="Basic residues" evidence="2">
    <location>
        <begin position="48"/>
        <end position="58"/>
    </location>
</feature>
<feature type="compositionally biased region" description="Polar residues" evidence="2">
    <location>
        <begin position="60"/>
        <end position="77"/>
    </location>
</feature>
<feature type="binding site" evidence="1">
    <location>
        <position position="22"/>
    </location>
    <ligand>
        <name>Zn(2+)</name>
        <dbReference type="ChEBI" id="CHEBI:29105"/>
        <label>1</label>
    </ligand>
</feature>
<feature type="binding site" evidence="1">
    <location>
        <position position="25"/>
    </location>
    <ligand>
        <name>Zn(2+)</name>
        <dbReference type="ChEBI" id="CHEBI:29105"/>
        <label>2</label>
    </ligand>
</feature>
<feature type="binding site" evidence="1">
    <location>
        <position position="27"/>
    </location>
    <ligand>
        <name>Zn(2+)</name>
        <dbReference type="ChEBI" id="CHEBI:29105"/>
        <label>2</label>
    </ligand>
</feature>
<feature type="binding site" evidence="1">
    <location>
        <position position="30"/>
    </location>
    <ligand>
        <name>Zn(2+)</name>
        <dbReference type="ChEBI" id="CHEBI:29105"/>
        <label>2</label>
    </ligand>
</feature>
<feature type="binding site" evidence="1">
    <location>
        <position position="33"/>
    </location>
    <ligand>
        <name>Zn(2+)</name>
        <dbReference type="ChEBI" id="CHEBI:29105"/>
        <label>1</label>
    </ligand>
</feature>
<feature type="binding site" evidence="1">
    <location>
        <position position="34"/>
    </location>
    <ligand>
        <name>Zn(2+)</name>
        <dbReference type="ChEBI" id="CHEBI:29105"/>
        <label>1</label>
    </ligand>
</feature>
<feature type="binding site" evidence="1">
    <location>
        <position position="37"/>
    </location>
    <ligand>
        <name>Zn(2+)</name>
        <dbReference type="ChEBI" id="CHEBI:29105"/>
        <label>1</label>
    </ligand>
</feature>
<feature type="site" description="Essential for Tat translocation through the endosomal membrane" evidence="1">
    <location>
        <position position="11"/>
    </location>
</feature>
<feature type="modified residue" description="N6-acetyllysine; by host PCAF" evidence="1">
    <location>
        <position position="28"/>
    </location>
</feature>
<feature type="modified residue" description="N6-acetyllysine; by host EP300 and GCN5L2" evidence="1">
    <location>
        <position position="50"/>
    </location>
</feature>
<feature type="modified residue" description="N6-acetyllysine; by host EP300 and GCN5L2" evidence="1">
    <location>
        <position position="51"/>
    </location>
</feature>
<feature type="modified residue" description="Asymmetric dimethylarginine; by host PRMT6" evidence="1">
    <location>
        <position position="52"/>
    </location>
</feature>
<feature type="modified residue" description="Asymmetric dimethylarginine; by host PRMT6" evidence="1">
    <location>
        <position position="53"/>
    </location>
</feature>
<feature type="cross-link" description="Glycyl lysine isopeptide (Lys-Gly) (interchain with G-Cter in ubiquitin)" evidence="1">
    <location>
        <position position="71"/>
    </location>
</feature>
<feature type="splice variant" id="VSP_022435" description="In isoform Short.">
    <location>
        <begin position="73"/>
        <end position="86"/>
    </location>
</feature>
<feature type="strand" evidence="4">
    <location>
        <begin position="3"/>
        <end position="8"/>
    </location>
</feature>
<feature type="strand" evidence="5">
    <location>
        <begin position="9"/>
        <end position="11"/>
    </location>
</feature>
<feature type="strand" evidence="4">
    <location>
        <begin position="15"/>
        <end position="17"/>
    </location>
</feature>
<feature type="turn" evidence="4">
    <location>
        <begin position="18"/>
        <end position="20"/>
    </location>
</feature>
<feature type="turn" evidence="4">
    <location>
        <begin position="27"/>
        <end position="33"/>
    </location>
</feature>
<feature type="strand" evidence="4">
    <location>
        <begin position="43"/>
        <end position="47"/>
    </location>
</feature>
<feature type="helix" evidence="4">
    <location>
        <begin position="52"/>
        <end position="54"/>
    </location>
</feature>
<feature type="strand" evidence="5">
    <location>
        <begin position="61"/>
        <end position="64"/>
    </location>
</feature>
<feature type="strand" evidence="4">
    <location>
        <begin position="66"/>
        <end position="69"/>
    </location>
</feature>
<feature type="turn" evidence="4">
    <location>
        <begin position="76"/>
        <end position="79"/>
    </location>
</feature>
<organism>
    <name type="scientific">Human immunodeficiency virus type 1 group M subtype D (isolate Z2/CDC-Z34)</name>
    <name type="common">HIV-1</name>
    <dbReference type="NCBI Taxonomy" id="11683"/>
    <lineage>
        <taxon>Viruses</taxon>
        <taxon>Riboviria</taxon>
        <taxon>Pararnavirae</taxon>
        <taxon>Artverviricota</taxon>
        <taxon>Revtraviricetes</taxon>
        <taxon>Ortervirales</taxon>
        <taxon>Retroviridae</taxon>
        <taxon>Orthoretrovirinae</taxon>
        <taxon>Lentivirus</taxon>
        <taxon>Human immunodeficiency virus type 1</taxon>
    </lineage>
</organism>
<accession>P12506</accession>
<sequence>MDPVDPNIEPWNHPGSQPKTACNRCHCKKCCYHCQVCFITKGLGISYGRKKRRQRRRPSQGGQTHQDPIPKQPSSQPRGDPTGPKE</sequence>
<evidence type="ECO:0000255" key="1">
    <source>
        <dbReference type="HAMAP-Rule" id="MF_04079"/>
    </source>
</evidence>
<evidence type="ECO:0000256" key="2">
    <source>
        <dbReference type="SAM" id="MobiDB-lite"/>
    </source>
</evidence>
<evidence type="ECO:0000305" key="3"/>
<evidence type="ECO:0007829" key="4">
    <source>
        <dbReference type="PDB" id="1TAC"/>
    </source>
</evidence>
<evidence type="ECO:0007829" key="5">
    <source>
        <dbReference type="PDB" id="1TIV"/>
    </source>
</evidence>
<dbReference type="EMBL" id="M22639">
    <property type="protein sequence ID" value="AAA45363.1"/>
    <property type="molecule type" value="Genomic_RNA"/>
</dbReference>
<dbReference type="PIR" id="S54381">
    <property type="entry name" value="S54381"/>
</dbReference>
<dbReference type="PDB" id="1TAC">
    <property type="method" value="NMR"/>
    <property type="chains" value="A=2-86"/>
</dbReference>
<dbReference type="PDB" id="1TBC">
    <property type="method" value="NMR"/>
    <property type="chains" value="A=2-86"/>
</dbReference>
<dbReference type="PDB" id="1TIV">
    <property type="method" value="NMR"/>
    <property type="chains" value="A=1-86"/>
</dbReference>
<dbReference type="PDB" id="2BGN">
    <property type="method" value="X-ray"/>
    <property type="resolution" value="3.15 A"/>
    <property type="chains" value="W/X/Y/Z=1-9"/>
</dbReference>
<dbReference type="PDB" id="2BGR">
    <property type="method" value="X-ray"/>
    <property type="resolution" value="2.00 A"/>
    <property type="chains" value="Y/Z=1-9"/>
</dbReference>
<dbReference type="PDB" id="8CCW">
    <property type="method" value="X-ray"/>
    <property type="resolution" value="1.65 A"/>
    <property type="chains" value="B=46-54"/>
</dbReference>
<dbReference type="PDB" id="8CCZ">
    <property type="method" value="X-ray"/>
    <property type="resolution" value="1.95 A"/>
    <property type="chains" value="C/D=37-59"/>
</dbReference>
<dbReference type="PDBsum" id="1TAC"/>
<dbReference type="PDBsum" id="1TBC"/>
<dbReference type="PDBsum" id="1TIV"/>
<dbReference type="PDBsum" id="2BGN"/>
<dbReference type="PDBsum" id="2BGR"/>
<dbReference type="PDBsum" id="8CCW"/>
<dbReference type="PDBsum" id="8CCZ"/>
<dbReference type="SMR" id="P12506"/>
<dbReference type="EvolutionaryTrace" id="P12506"/>
<dbReference type="Proteomes" id="UP000155099">
    <property type="component" value="Genome"/>
</dbReference>
<dbReference type="GO" id="GO:0005576">
    <property type="term" value="C:extracellular region"/>
    <property type="evidence" value="ECO:0007669"/>
    <property type="project" value="UniProtKB-SubCell"/>
</dbReference>
<dbReference type="GO" id="GO:0030430">
    <property type="term" value="C:host cell cytoplasm"/>
    <property type="evidence" value="ECO:0007669"/>
    <property type="project" value="UniProtKB-SubCell"/>
</dbReference>
<dbReference type="GO" id="GO:0044196">
    <property type="term" value="C:host cell nucleolus"/>
    <property type="evidence" value="ECO:0007669"/>
    <property type="project" value="UniProtKB-SubCell"/>
</dbReference>
<dbReference type="GO" id="GO:0042805">
    <property type="term" value="F:actinin binding"/>
    <property type="evidence" value="ECO:0007669"/>
    <property type="project" value="UniProtKB-UniRule"/>
</dbReference>
<dbReference type="GO" id="GO:0030332">
    <property type="term" value="F:cyclin binding"/>
    <property type="evidence" value="ECO:0007669"/>
    <property type="project" value="UniProtKB-UniRule"/>
</dbReference>
<dbReference type="GO" id="GO:0046872">
    <property type="term" value="F:metal ion binding"/>
    <property type="evidence" value="ECO:0007669"/>
    <property type="project" value="UniProtKB-UniRule"/>
</dbReference>
<dbReference type="GO" id="GO:0019904">
    <property type="term" value="F:protein domain specific binding"/>
    <property type="evidence" value="ECO:0007669"/>
    <property type="project" value="UniProtKB-UniRule"/>
</dbReference>
<dbReference type="GO" id="GO:0004865">
    <property type="term" value="F:protein serine/threonine phosphatase inhibitor activity"/>
    <property type="evidence" value="ECO:0007669"/>
    <property type="project" value="UniProtKB-KW"/>
</dbReference>
<dbReference type="GO" id="GO:0001069">
    <property type="term" value="F:regulatory region RNA binding"/>
    <property type="evidence" value="ECO:0000353"/>
    <property type="project" value="DisProt"/>
</dbReference>
<dbReference type="GO" id="GO:0001070">
    <property type="term" value="F:RNA-binding transcription regulator activity"/>
    <property type="evidence" value="ECO:0007669"/>
    <property type="project" value="UniProtKB-UniRule"/>
</dbReference>
<dbReference type="GO" id="GO:1990970">
    <property type="term" value="F:trans-activation response element binding"/>
    <property type="evidence" value="ECO:0007669"/>
    <property type="project" value="UniProtKB-UniRule"/>
</dbReference>
<dbReference type="GO" id="GO:0006351">
    <property type="term" value="P:DNA-templated transcription"/>
    <property type="evidence" value="ECO:0007669"/>
    <property type="project" value="UniProtKB-UniRule"/>
</dbReference>
<dbReference type="GO" id="GO:0032968">
    <property type="term" value="P:positive regulation of transcription elongation by RNA polymerase II"/>
    <property type="evidence" value="ECO:0007669"/>
    <property type="project" value="UniProtKB-UniRule"/>
</dbReference>
<dbReference type="GO" id="GO:0050434">
    <property type="term" value="P:positive regulation of viral transcription"/>
    <property type="evidence" value="ECO:0007669"/>
    <property type="project" value="UniProtKB-UniRule"/>
</dbReference>
<dbReference type="GO" id="GO:0039525">
    <property type="term" value="P:symbiont-mediated perturbation of host chromatin organization"/>
    <property type="evidence" value="ECO:0007669"/>
    <property type="project" value="UniProtKB-UniRule"/>
</dbReference>
<dbReference type="GO" id="GO:0052170">
    <property type="term" value="P:symbiont-mediated suppression of host innate immune response"/>
    <property type="evidence" value="ECO:0007669"/>
    <property type="project" value="UniProtKB-KW"/>
</dbReference>
<dbReference type="GO" id="GO:0039606">
    <property type="term" value="P:symbiont-mediated suppression of host translation initiation"/>
    <property type="evidence" value="ECO:0007669"/>
    <property type="project" value="UniProtKB-KW"/>
</dbReference>
<dbReference type="GO" id="GO:0039502">
    <property type="term" value="P:symbiont-mediated suppression of host type I interferon-mediated signaling pathway"/>
    <property type="evidence" value="ECO:0007669"/>
    <property type="project" value="UniProtKB-UniRule"/>
</dbReference>
<dbReference type="GO" id="GO:0019080">
    <property type="term" value="P:viral gene expression"/>
    <property type="evidence" value="ECO:0000270"/>
    <property type="project" value="DisProt"/>
</dbReference>
<dbReference type="Gene3D" id="4.10.20.10">
    <property type="entry name" value="Tat domain"/>
    <property type="match status" value="1"/>
</dbReference>
<dbReference type="HAMAP" id="MF_04079">
    <property type="entry name" value="HIV_TAT"/>
    <property type="match status" value="1"/>
</dbReference>
<dbReference type="IDEAL" id="IID90035"/>
<dbReference type="InterPro" id="IPR001831">
    <property type="entry name" value="IV_Tat"/>
</dbReference>
<dbReference type="InterPro" id="IPR036963">
    <property type="entry name" value="Tat_dom_sf"/>
</dbReference>
<dbReference type="Pfam" id="PF00539">
    <property type="entry name" value="Tat"/>
    <property type="match status" value="1"/>
</dbReference>
<dbReference type="PRINTS" id="PR00055">
    <property type="entry name" value="HIVTATDOMAIN"/>
</dbReference>
<proteinExistence type="evidence at protein level"/>
<protein>
    <recommendedName>
        <fullName evidence="1">Protein Tat</fullName>
    </recommendedName>
    <alternativeName>
        <fullName evidence="1">Transactivating regulatory protein</fullName>
    </alternativeName>
</protein>
<gene>
    <name evidence="1" type="primary">tat</name>
</gene>
<name>TAT_HV1Z2</name>
<comment type="function">
    <text evidence="1">Transcriptional activator that increases RNA Pol II processivity, thereby increasing the level of full-length viral transcripts. Recognizes a hairpin structure at the 5'-LTR of the nascent viral mRNAs referred to as the transactivation responsive RNA element (TAR) and recruits the cyclin T1-CDK9 complex (P-TEFb complex) that will in turn hyperphosphorylate the RNA polymerase II to allow efficient elongation. The CDK9 component of P-TEFb and other Tat-activated kinases hyperphosphorylate the C-terminus of RNA Pol II that becomes stabilized and much more processive. Other factors such as HTATSF1/Tat-SF1, SUPT5H/SPT5, and HTATIP2 are also important for Tat's function. Besides its effect on RNA Pol II processivity, Tat induces chromatin remodeling of proviral genes by recruiting the histone acetyltransferases (HATs) CREBBP, EP300 and PCAF to the chromatin. This also contributes to the increase in proviral transcription rate, especially when the provirus integrates in transcriptionally silent region of the host genome. To ensure maximal activation of the LTR, Tat mediates nuclear translocation of NF-kappa-B by interacting with host RELA. Through its interaction with host TBP, Tat may also modulate transcription initiation. Tat can reactivate a latently infected cell by penetrating in it and transactivating its LTR promoter. In the cytoplasm, Tat is thought to act as a translational activator of HIV-1 mRNAs.</text>
</comment>
<comment type="function">
    <text evidence="1">Extracellular circulating Tat can be endocytosed by surrounding uninfected cells via the binding to several surface receptors such as CD26, CXCR4, heparan sulfate proteoglycans (HSPG) or LDLR. Neurons are rarely infected, but they internalize Tat via their LDLR. Through its interaction with nuclear HATs, Tat is potentially able to control the acetylation-dependent cellular gene expression. Modulates the expression of many cellular genes involved in cell survival, proliferation or in coding for cytokines or cytokine receptors. Tat plays a role in T-cell and neurons apoptosis. Tat induced neurotoxicity and apoptosis probably contribute to neuroAIDS. Circulating Tat also acts as a chemokine-like and/or growth factor-like molecule that binds to specific receptors on the surface of the cells, affecting many cellular pathways. In the vascular system, Tat binds to ITGAV/ITGB3 and ITGA5/ITGB1 integrins dimers at the surface of endothelial cells and competes with bFGF for heparin-binding sites, leading to an excess of soluble bFGF.</text>
</comment>
<comment type="subunit">
    <text evidence="1">Interacts with host CCNT1. Associates with the P-TEFb complex composed at least of Tat, P-TEFb (CDK9 and CCNT1), TAR RNA, RNA Pol II. Recruits the HATs CREBBP, TAF1/TFIID, EP300, PCAF and GCN5L2. Interacts with host KAT5/Tip60; this interaction targets the latter to degradation. Interacts with the host deacetylase SIRT1. Interacts with host capping enzyme RNGTT; this interaction stimulates RNGTT. Binds to host KDR, and to the host integrins ITGAV/ITGB3 and ITGA5/ITGB1. Interacts with host KPNB1/importin beta-1 without previous binding to KPNA1/importin alpha-1. Interacts with EIF2AK2. Interacts with host nucleosome assembly protein NAP1L1; this interaction may be required for the transport of Tat within the nucleus, since the two proteins interact at the nuclear rim. Interacts with host C1QBP/SF2P32; this interaction involves lysine-acetylated Tat. Interacts with the host chemokine receptors CCR2, CCR3 and CXCR4. Interacts with host DPP4/CD26; this interaction may trigger an anti-proliferative effect. Interacts with host LDLR. Interacts with the host extracellular matrix metalloproteinase MMP1. Interacts with host PRMT6; this interaction mediates Tat's methylation. Interacts with, and is ubiquitinated by MDM2/Hdm2. Interacts with host PSMC3 and HTATIP2. Interacts with STAB1; this interaction may overcome SATB1-mediated repression of IL2 and IL2RA (interleukin) in T cells by binding to the same domain than HDAC1. Interacts (when acetylated) with human CDK13, thereby increasing HIV-1 mRNA splicing and promoting the production of the doubly spliced HIV-1 protein Nef. Interacts with host TBP; this interaction modulates the activity of transcriptional pre-initiation complex. Interacts with host RELA. Interacts with host PLSCR1; this interaction negatively regulates Tat transactivation activity by altering its subcellular distribution.</text>
</comment>
<comment type="subcellular location">
    <subcellularLocation>
        <location evidence="1">Host nucleus</location>
        <location evidence="1">Host nucleolus</location>
    </subcellularLocation>
    <subcellularLocation>
        <location evidence="1">Host cytoplasm</location>
    </subcellularLocation>
    <subcellularLocation>
        <location evidence="1">Secreted</location>
    </subcellularLocation>
    <text evidence="1">Probably localizes to both nuclear and nucleolar compartments. Nuclear localization is mediated through the interaction of the nuclear localization signal with importin KPNB1. Secretion occurs through a Golgi-independent pathway. Tat is released from infected cells to the extracellular space where it remains associated to the cell membrane, or is secreted into the cerebrospinal fluid and sera. Extracellular Tat can be endocytosed by surrounding uninfected cells via binding to several receptors depending on the cell type.</text>
</comment>
<comment type="alternative products">
    <event type="alternative splicing"/>
    <isoform>
        <id>P12506-1</id>
        <name>Long</name>
        <sequence type="displayed"/>
    </isoform>
    <isoform>
        <id>P12506-2</id>
        <name>Short</name>
        <sequence type="described" ref="VSP_022435"/>
    </isoform>
</comment>
<comment type="domain">
    <text evidence="1">The cell attachment site mediates the interaction with ITGAV/ITGB3 and ITGA5/ITGB1 integrins, leading to vascular cell migration and invasion. This interaction also provides endothelial cells with the adhesion signal they require to grow in response to mitogens.</text>
</comment>
<comment type="domain">
    <text evidence="1">The Cys-rich region may bind 2 zinc ions. This region is involved in binding to KAT5.</text>
</comment>
<comment type="domain">
    <text evidence="1">The transactivation domain mediates the interaction with CCNT1, GCN5L2, and MDM2.</text>
</comment>
<comment type="domain">
    <text>The Arg-rich RNA-binding region binds the TAR RNA. This region also mediates the nuclear localization through direct binding to KPNB1 and is involved in Tat's transfer across cell membranes (protein transduction). The same region is required for the interaction with EP300, PCAF, EIF2AK2 and KDR.</text>
</comment>
<comment type="PTM">
    <text evidence="1">Asymmetrical arginine methylation by host PRMT6 seems to diminish the transactivation capacity of Tat and affects the interaction with host CCNT1.</text>
</comment>
<comment type="PTM">
    <text evidence="1">Acetylation by EP300, CREBBP, GCN5L2/GCN5 and PCAF regulates the transactivation activity of Tat. EP300-mediated acetylation of Lys-50 promotes dissociation of Tat from the TAR RNA through the competitive binding to PCAF's bromodomain. In addition, the non-acetylated Tat's N-terminus can also interact with PCAF. PCAF-mediated acetylation of Lys-28 enhances Tat's binding to CCNT1. Lys-50 is deacetylated by SIRT1.</text>
</comment>
<comment type="PTM">
    <text evidence="1">Polyubiquitination by host MDM2 does not target Tat to degradation, but activates its transactivation function and fosters interaction with CCNT1 and TAR RNA.</text>
</comment>
<comment type="PTM">
    <text evidence="1">Phosphorylated by EIF2AK2 on serine and threonine residues adjacent to the basic region important for TAR RNA binding and function. Phosphorylation of Tat by EIF2AK2 is dependent on the prior activation of EIF2AK2 by dsRNA.</text>
</comment>
<comment type="miscellaneous">
    <text evidence="1">This truncated variant has a premature stop codon. It may have arose as a consequence of tissue culture passaging.</text>
</comment>
<comment type="miscellaneous">
    <text evidence="1">HIV-1 lineages are divided in three main groups, M (for Major), O (for Outlier), and N (for New, or Non-M, Non-O). The vast majority of strains found worldwide belong to the group M. Group O seems to be endemic to and largely confined to Cameroon and neighboring countries in West Central Africa, where these viruses represent a small minority of HIV-1 strains. The group N is represented by a limited number of isolates from Cameroonian persons. The group M is further subdivided in 9 clades or subtypes (A to D, F to H, J and K).</text>
</comment>
<comment type="miscellaneous">
    <molecule>Isoform Short</molecule>
    <text evidence="3">Expressed in the late stage of the infection cycle, when unspliced viral RNAs are exported to the cytoplasm by the viral Rev protein.</text>
</comment>
<comment type="similarity">
    <text evidence="1">Belongs to the lentiviruses Tat family.</text>
</comment>
<keyword id="KW-0002">3D-structure</keyword>
<keyword id="KW-0007">Acetylation</keyword>
<keyword id="KW-0010">Activator</keyword>
<keyword id="KW-0014">AIDS</keyword>
<keyword id="KW-0025">Alternative splicing</keyword>
<keyword id="KW-0053">Apoptosis</keyword>
<keyword id="KW-1035">Host cytoplasm</keyword>
<keyword id="KW-1048">Host nucleus</keyword>
<keyword id="KW-0945">Host-virus interaction</keyword>
<keyword id="KW-1090">Inhibition of host innate immune response by virus</keyword>
<keyword id="KW-1114">Inhibition of host interferon signaling pathway by virus</keyword>
<keyword id="KW-0922">Interferon antiviral system evasion</keyword>
<keyword id="KW-1017">Isopeptide bond</keyword>
<keyword id="KW-0479">Metal-binding</keyword>
<keyword id="KW-0488">Methylation</keyword>
<keyword id="KW-1122">Modulation of host chromatin by virus</keyword>
<keyword id="KW-1126">Modulation of host PP1 activity by virus</keyword>
<keyword id="KW-0597">Phosphoprotein</keyword>
<keyword id="KW-0694">RNA-binding</keyword>
<keyword id="KW-0964">Secreted</keyword>
<keyword id="KW-0804">Transcription</keyword>
<keyword id="KW-0805">Transcription regulation</keyword>
<keyword id="KW-0832">Ubl conjugation</keyword>
<keyword id="KW-0899">Viral immunoevasion</keyword>
<keyword id="KW-0862">Zinc</keyword>
<organismHost>
    <name type="scientific">Homo sapiens</name>
    <name type="common">Human</name>
    <dbReference type="NCBI Taxonomy" id="9606"/>
</organismHost>
<reference key="1">
    <citation type="submission" date="1989-07" db="EMBL/GenBank/DDBJ databases">
        <authorList>
            <person name="Theodore T."/>
            <person name="Buckler-White A.J."/>
        </authorList>
    </citation>
    <scope>NUCLEOTIDE SEQUENCE [GENOMIC RNA]</scope>
</reference>
<reference key="2">
    <citation type="journal article" date="2005" name="Microbes Infect.">
        <title>Decoding Tat: the biology of HIV Tat posttranslational modifications.</title>
        <authorList>
            <person name="Hetzer C."/>
            <person name="Dormeyer W."/>
            <person name="Schnolzer M."/>
            <person name="Ott M."/>
        </authorList>
    </citation>
    <scope>REVIEW</scope>
    <scope>ALTERNATIVE SPLICING</scope>
</reference>
<reference key="3">
    <citation type="journal article" date="2006" name="Front. Biosci.">
        <title>The multiple functions of HIV-1 Tat: proliferation versus apoptosis.</title>
        <authorList>
            <person name="Peruzzi F."/>
        </authorList>
    </citation>
    <scope>REVIEW</scope>
</reference>
<reference key="4">
    <citation type="journal article" date="2006" name="Microbes Infect.">
        <title>HIV tat and neurotoxicity.</title>
        <authorList>
            <person name="King J.E."/>
            <person name="Eugenin E.A."/>
            <person name="Buckner C.M."/>
            <person name="Berman J.W."/>
        </authorList>
    </citation>
    <scope>REVIEW</scope>
</reference>